<sequence length="707" mass="77729">MSERLSEISRHMRELRDAIELHNIRYYELDTPTIPDADFDKLFRELEELEQRHPELITPDSPTQRVGIPPLKAFPQVVHRTPMLSLSNAFTEGEVEAFDRRVRQSLGIAQVEYAVEPKFDGLAISLCYENGMLVSGATRGDGYIGEDVTLNLKTIRSIPLGLRAGDGSAEVPAFLEVRGEVLMLKADFERLNRQQREKNEKTFINPRNAAAGSLRQLDPCITANRNLRFFAYGIGVCEGGNVPHDTHSHLLDYLSSLRFPVMRERRTVTGVAGLLEYHHEINGLREQLSYDIDGTVYKVNELEYQEKLGFVSRAPRFALAHKFPAQEATTELLGIDVQVGRTGALTPVARLKPVFVGGATVTNATLHNEDEIRRKDVMIGDRVTVRRAGDVIPEVVAVQKESRPSNAKPFVMPEHCPVCGSRTIRLPGETLTRCTGGLFCPAQRKQAILHFASRRAMNIHGLGDKLVDHLVDNAIIRTPADLYKLGLAALAALDRMGEKSAGNIINEIEKSKDTTLARFIYSLGIRNVGEATARDLARYFGGLDRLMDADVETLQQVSDVGPVVAQSIADFFGERHNREVVEQLRAAGIRWKEGAGTQTTDHAAGSAHPGAAAASSKIAGRSFVLTGTLPTMSREEAREKIEAMGGKVAGSVSKKTDYVVAGADAGSKYDKALELGVALLDEAELIRLLQASQADNSSTHVDPERMV</sequence>
<dbReference type="EC" id="6.5.1.2" evidence="1"/>
<dbReference type="EMBL" id="CP000103">
    <property type="protein sequence ID" value="ABB73954.1"/>
    <property type="molecule type" value="Genomic_DNA"/>
</dbReference>
<dbReference type="RefSeq" id="WP_011380004.1">
    <property type="nucleotide sequence ID" value="NZ_FNVK01000003.1"/>
</dbReference>
<dbReference type="SMR" id="Q2YBB7"/>
<dbReference type="STRING" id="323848.Nmul_A0647"/>
<dbReference type="KEGG" id="nmu:Nmul_A0647"/>
<dbReference type="eggNOG" id="COG0272">
    <property type="taxonomic scope" value="Bacteria"/>
</dbReference>
<dbReference type="HOGENOM" id="CLU_007764_2_1_4"/>
<dbReference type="OrthoDB" id="9759736at2"/>
<dbReference type="Proteomes" id="UP000002718">
    <property type="component" value="Chromosome"/>
</dbReference>
<dbReference type="GO" id="GO:0003677">
    <property type="term" value="F:DNA binding"/>
    <property type="evidence" value="ECO:0007669"/>
    <property type="project" value="InterPro"/>
</dbReference>
<dbReference type="GO" id="GO:0003911">
    <property type="term" value="F:DNA ligase (NAD+) activity"/>
    <property type="evidence" value="ECO:0007669"/>
    <property type="project" value="UniProtKB-UniRule"/>
</dbReference>
<dbReference type="GO" id="GO:0046872">
    <property type="term" value="F:metal ion binding"/>
    <property type="evidence" value="ECO:0007669"/>
    <property type="project" value="UniProtKB-KW"/>
</dbReference>
<dbReference type="GO" id="GO:0006281">
    <property type="term" value="P:DNA repair"/>
    <property type="evidence" value="ECO:0007669"/>
    <property type="project" value="UniProtKB-KW"/>
</dbReference>
<dbReference type="GO" id="GO:0006260">
    <property type="term" value="P:DNA replication"/>
    <property type="evidence" value="ECO:0007669"/>
    <property type="project" value="UniProtKB-KW"/>
</dbReference>
<dbReference type="CDD" id="cd17748">
    <property type="entry name" value="BRCT_DNA_ligase_like"/>
    <property type="match status" value="1"/>
</dbReference>
<dbReference type="CDD" id="cd00114">
    <property type="entry name" value="LIGANc"/>
    <property type="match status" value="1"/>
</dbReference>
<dbReference type="FunFam" id="1.10.150.20:FF:000006">
    <property type="entry name" value="DNA ligase"/>
    <property type="match status" value="1"/>
</dbReference>
<dbReference type="FunFam" id="1.10.150.20:FF:000007">
    <property type="entry name" value="DNA ligase"/>
    <property type="match status" value="1"/>
</dbReference>
<dbReference type="FunFam" id="1.10.287.610:FF:000002">
    <property type="entry name" value="DNA ligase"/>
    <property type="match status" value="1"/>
</dbReference>
<dbReference type="FunFam" id="2.40.50.140:FF:000012">
    <property type="entry name" value="DNA ligase"/>
    <property type="match status" value="1"/>
</dbReference>
<dbReference type="FunFam" id="3.30.470.30:FF:000001">
    <property type="entry name" value="DNA ligase"/>
    <property type="match status" value="1"/>
</dbReference>
<dbReference type="Gene3D" id="6.20.10.30">
    <property type="match status" value="1"/>
</dbReference>
<dbReference type="Gene3D" id="1.10.150.20">
    <property type="entry name" value="5' to 3' exonuclease, C-terminal subdomain"/>
    <property type="match status" value="2"/>
</dbReference>
<dbReference type="Gene3D" id="3.40.50.10190">
    <property type="entry name" value="BRCT domain"/>
    <property type="match status" value="1"/>
</dbReference>
<dbReference type="Gene3D" id="3.30.470.30">
    <property type="entry name" value="DNA ligase/mRNA capping enzyme"/>
    <property type="match status" value="1"/>
</dbReference>
<dbReference type="Gene3D" id="1.10.287.610">
    <property type="entry name" value="Helix hairpin bin"/>
    <property type="match status" value="1"/>
</dbReference>
<dbReference type="Gene3D" id="2.40.50.140">
    <property type="entry name" value="Nucleic acid-binding proteins"/>
    <property type="match status" value="1"/>
</dbReference>
<dbReference type="HAMAP" id="MF_01588">
    <property type="entry name" value="DNA_ligase_A"/>
    <property type="match status" value="1"/>
</dbReference>
<dbReference type="InterPro" id="IPR001357">
    <property type="entry name" value="BRCT_dom"/>
</dbReference>
<dbReference type="InterPro" id="IPR036420">
    <property type="entry name" value="BRCT_dom_sf"/>
</dbReference>
<dbReference type="InterPro" id="IPR041663">
    <property type="entry name" value="DisA/LigA_HHH"/>
</dbReference>
<dbReference type="InterPro" id="IPR001679">
    <property type="entry name" value="DNA_ligase"/>
</dbReference>
<dbReference type="InterPro" id="IPR018239">
    <property type="entry name" value="DNA_ligase_AS"/>
</dbReference>
<dbReference type="InterPro" id="IPR033136">
    <property type="entry name" value="DNA_ligase_CS"/>
</dbReference>
<dbReference type="InterPro" id="IPR013839">
    <property type="entry name" value="DNAligase_adenylation"/>
</dbReference>
<dbReference type="InterPro" id="IPR013840">
    <property type="entry name" value="DNAligase_N"/>
</dbReference>
<dbReference type="InterPro" id="IPR003583">
    <property type="entry name" value="Hlx-hairpin-Hlx_DNA-bd_motif"/>
</dbReference>
<dbReference type="InterPro" id="IPR012340">
    <property type="entry name" value="NA-bd_OB-fold"/>
</dbReference>
<dbReference type="InterPro" id="IPR004150">
    <property type="entry name" value="NAD_DNA_ligase_OB"/>
</dbReference>
<dbReference type="InterPro" id="IPR010994">
    <property type="entry name" value="RuvA_2-like"/>
</dbReference>
<dbReference type="InterPro" id="IPR004149">
    <property type="entry name" value="Znf_DNAligase_C4"/>
</dbReference>
<dbReference type="NCBIfam" id="TIGR00575">
    <property type="entry name" value="dnlj"/>
    <property type="match status" value="1"/>
</dbReference>
<dbReference type="NCBIfam" id="NF005932">
    <property type="entry name" value="PRK07956.1"/>
    <property type="match status" value="1"/>
</dbReference>
<dbReference type="PANTHER" id="PTHR23389">
    <property type="entry name" value="CHROMOSOME TRANSMISSION FIDELITY FACTOR 18"/>
    <property type="match status" value="1"/>
</dbReference>
<dbReference type="PANTHER" id="PTHR23389:SF6">
    <property type="entry name" value="REPLICATION FACTOR C SUBUNIT 1"/>
    <property type="match status" value="1"/>
</dbReference>
<dbReference type="Pfam" id="PF00533">
    <property type="entry name" value="BRCT"/>
    <property type="match status" value="1"/>
</dbReference>
<dbReference type="Pfam" id="PF01653">
    <property type="entry name" value="DNA_ligase_aden"/>
    <property type="match status" value="1"/>
</dbReference>
<dbReference type="Pfam" id="PF03120">
    <property type="entry name" value="DNA_ligase_OB"/>
    <property type="match status" value="1"/>
</dbReference>
<dbReference type="Pfam" id="PF03119">
    <property type="entry name" value="DNA_ligase_ZBD"/>
    <property type="match status" value="1"/>
</dbReference>
<dbReference type="Pfam" id="PF12826">
    <property type="entry name" value="HHH_2"/>
    <property type="match status" value="1"/>
</dbReference>
<dbReference type="Pfam" id="PF14520">
    <property type="entry name" value="HHH_5"/>
    <property type="match status" value="1"/>
</dbReference>
<dbReference type="Pfam" id="PF22745">
    <property type="entry name" value="Nlig-Ia"/>
    <property type="match status" value="1"/>
</dbReference>
<dbReference type="PIRSF" id="PIRSF001604">
    <property type="entry name" value="LigA"/>
    <property type="match status" value="1"/>
</dbReference>
<dbReference type="SMART" id="SM00292">
    <property type="entry name" value="BRCT"/>
    <property type="match status" value="1"/>
</dbReference>
<dbReference type="SMART" id="SM00278">
    <property type="entry name" value="HhH1"/>
    <property type="match status" value="3"/>
</dbReference>
<dbReference type="SMART" id="SM00532">
    <property type="entry name" value="LIGANc"/>
    <property type="match status" value="1"/>
</dbReference>
<dbReference type="SUPFAM" id="SSF52113">
    <property type="entry name" value="BRCT domain"/>
    <property type="match status" value="1"/>
</dbReference>
<dbReference type="SUPFAM" id="SSF56091">
    <property type="entry name" value="DNA ligase/mRNA capping enzyme, catalytic domain"/>
    <property type="match status" value="1"/>
</dbReference>
<dbReference type="SUPFAM" id="SSF50249">
    <property type="entry name" value="Nucleic acid-binding proteins"/>
    <property type="match status" value="1"/>
</dbReference>
<dbReference type="SUPFAM" id="SSF47781">
    <property type="entry name" value="RuvA domain 2-like"/>
    <property type="match status" value="1"/>
</dbReference>
<dbReference type="PROSITE" id="PS50172">
    <property type="entry name" value="BRCT"/>
    <property type="match status" value="1"/>
</dbReference>
<dbReference type="PROSITE" id="PS01055">
    <property type="entry name" value="DNA_LIGASE_N1"/>
    <property type="match status" value="1"/>
</dbReference>
<dbReference type="PROSITE" id="PS01056">
    <property type="entry name" value="DNA_LIGASE_N2"/>
    <property type="match status" value="1"/>
</dbReference>
<proteinExistence type="inferred from homology"/>
<protein>
    <recommendedName>
        <fullName evidence="1">DNA ligase</fullName>
        <ecNumber evidence="1">6.5.1.2</ecNumber>
    </recommendedName>
    <alternativeName>
        <fullName evidence="1">Polydeoxyribonucleotide synthase [NAD(+)]</fullName>
    </alternativeName>
</protein>
<accession>Q2YBB7</accession>
<organism>
    <name type="scientific">Nitrosospira multiformis (strain ATCC 25196 / NCIMB 11849 / C 71)</name>
    <dbReference type="NCBI Taxonomy" id="323848"/>
    <lineage>
        <taxon>Bacteria</taxon>
        <taxon>Pseudomonadati</taxon>
        <taxon>Pseudomonadota</taxon>
        <taxon>Betaproteobacteria</taxon>
        <taxon>Nitrosomonadales</taxon>
        <taxon>Nitrosomonadaceae</taxon>
        <taxon>Nitrosospira</taxon>
    </lineage>
</organism>
<keyword id="KW-0227">DNA damage</keyword>
<keyword id="KW-0234">DNA repair</keyword>
<keyword id="KW-0235">DNA replication</keyword>
<keyword id="KW-0436">Ligase</keyword>
<keyword id="KW-0460">Magnesium</keyword>
<keyword id="KW-0464">Manganese</keyword>
<keyword id="KW-0479">Metal-binding</keyword>
<keyword id="KW-0520">NAD</keyword>
<keyword id="KW-1185">Reference proteome</keyword>
<keyword id="KW-0862">Zinc</keyword>
<feature type="chain" id="PRO_0000313341" description="DNA ligase">
    <location>
        <begin position="1"/>
        <end position="707"/>
    </location>
</feature>
<feature type="domain" description="BRCT" evidence="1">
    <location>
        <begin position="613"/>
        <end position="707"/>
    </location>
</feature>
<feature type="active site" description="N6-AMP-lysine intermediate" evidence="1">
    <location>
        <position position="118"/>
    </location>
</feature>
<feature type="binding site" evidence="1">
    <location>
        <begin position="36"/>
        <end position="40"/>
    </location>
    <ligand>
        <name>NAD(+)</name>
        <dbReference type="ChEBI" id="CHEBI:57540"/>
    </ligand>
</feature>
<feature type="binding site" evidence="1">
    <location>
        <begin position="85"/>
        <end position="86"/>
    </location>
    <ligand>
        <name>NAD(+)</name>
        <dbReference type="ChEBI" id="CHEBI:57540"/>
    </ligand>
</feature>
<feature type="binding site" evidence="1">
    <location>
        <position position="116"/>
    </location>
    <ligand>
        <name>NAD(+)</name>
        <dbReference type="ChEBI" id="CHEBI:57540"/>
    </ligand>
</feature>
<feature type="binding site" evidence="1">
    <location>
        <position position="139"/>
    </location>
    <ligand>
        <name>NAD(+)</name>
        <dbReference type="ChEBI" id="CHEBI:57540"/>
    </ligand>
</feature>
<feature type="binding site" evidence="1">
    <location>
        <position position="180"/>
    </location>
    <ligand>
        <name>NAD(+)</name>
        <dbReference type="ChEBI" id="CHEBI:57540"/>
    </ligand>
</feature>
<feature type="binding site" evidence="1">
    <location>
        <position position="298"/>
    </location>
    <ligand>
        <name>NAD(+)</name>
        <dbReference type="ChEBI" id="CHEBI:57540"/>
    </ligand>
</feature>
<feature type="binding site" evidence="1">
    <location>
        <position position="322"/>
    </location>
    <ligand>
        <name>NAD(+)</name>
        <dbReference type="ChEBI" id="CHEBI:57540"/>
    </ligand>
</feature>
<feature type="binding site" evidence="1">
    <location>
        <position position="416"/>
    </location>
    <ligand>
        <name>Zn(2+)</name>
        <dbReference type="ChEBI" id="CHEBI:29105"/>
    </ligand>
</feature>
<feature type="binding site" evidence="1">
    <location>
        <position position="419"/>
    </location>
    <ligand>
        <name>Zn(2+)</name>
        <dbReference type="ChEBI" id="CHEBI:29105"/>
    </ligand>
</feature>
<feature type="binding site" evidence="1">
    <location>
        <position position="434"/>
    </location>
    <ligand>
        <name>Zn(2+)</name>
        <dbReference type="ChEBI" id="CHEBI:29105"/>
    </ligand>
</feature>
<feature type="binding site" evidence="1">
    <location>
        <position position="440"/>
    </location>
    <ligand>
        <name>Zn(2+)</name>
        <dbReference type="ChEBI" id="CHEBI:29105"/>
    </ligand>
</feature>
<gene>
    <name evidence="1" type="primary">ligA</name>
    <name type="ordered locus">Nmul_A0647</name>
</gene>
<reference key="1">
    <citation type="submission" date="2005-08" db="EMBL/GenBank/DDBJ databases">
        <title>Complete sequence of chromosome 1 of Nitrosospira multiformis ATCC 25196.</title>
        <authorList>
            <person name="Copeland A."/>
            <person name="Lucas S."/>
            <person name="Lapidus A."/>
            <person name="Barry K."/>
            <person name="Detter J.C."/>
            <person name="Glavina T."/>
            <person name="Hammon N."/>
            <person name="Israni S."/>
            <person name="Pitluck S."/>
            <person name="Chain P."/>
            <person name="Malfatti S."/>
            <person name="Shin M."/>
            <person name="Vergez L."/>
            <person name="Schmutz J."/>
            <person name="Larimer F."/>
            <person name="Land M."/>
            <person name="Hauser L."/>
            <person name="Kyrpides N."/>
            <person name="Lykidis A."/>
            <person name="Richardson P."/>
        </authorList>
    </citation>
    <scope>NUCLEOTIDE SEQUENCE [LARGE SCALE GENOMIC DNA]</scope>
    <source>
        <strain>ATCC 25196 / NCIMB 11849 / C 71</strain>
    </source>
</reference>
<name>DNLJ_NITMU</name>
<evidence type="ECO:0000255" key="1">
    <source>
        <dbReference type="HAMAP-Rule" id="MF_01588"/>
    </source>
</evidence>
<comment type="function">
    <text evidence="1">DNA ligase that catalyzes the formation of phosphodiester linkages between 5'-phosphoryl and 3'-hydroxyl groups in double-stranded DNA using NAD as a coenzyme and as the energy source for the reaction. It is essential for DNA replication and repair of damaged DNA.</text>
</comment>
<comment type="catalytic activity">
    <reaction evidence="1">
        <text>NAD(+) + (deoxyribonucleotide)n-3'-hydroxyl + 5'-phospho-(deoxyribonucleotide)m = (deoxyribonucleotide)n+m + AMP + beta-nicotinamide D-nucleotide.</text>
        <dbReference type="EC" id="6.5.1.2"/>
    </reaction>
</comment>
<comment type="cofactor">
    <cofactor evidence="1">
        <name>Mg(2+)</name>
        <dbReference type="ChEBI" id="CHEBI:18420"/>
    </cofactor>
    <cofactor evidence="1">
        <name>Mn(2+)</name>
        <dbReference type="ChEBI" id="CHEBI:29035"/>
    </cofactor>
</comment>
<comment type="similarity">
    <text evidence="1">Belongs to the NAD-dependent DNA ligase family. LigA subfamily.</text>
</comment>